<keyword id="KW-0004">4Fe-4S</keyword>
<keyword id="KW-0408">Iron</keyword>
<keyword id="KW-0411">Iron-sulfur</keyword>
<keyword id="KW-0414">Isoprene biosynthesis</keyword>
<keyword id="KW-0479">Metal-binding</keyword>
<keyword id="KW-0560">Oxidoreductase</keyword>
<keyword id="KW-1185">Reference proteome</keyword>
<dbReference type="EC" id="1.17.7.4" evidence="1"/>
<dbReference type="EMBL" id="CU928145">
    <property type="protein sequence ID" value="CAU95915.1"/>
    <property type="molecule type" value="Genomic_DNA"/>
</dbReference>
<dbReference type="RefSeq" id="WP_001166395.1">
    <property type="nucleotide sequence ID" value="NZ_CP028304.1"/>
</dbReference>
<dbReference type="SMR" id="B7L4F1"/>
<dbReference type="GeneID" id="93777407"/>
<dbReference type="KEGG" id="eck:EC55989_0028"/>
<dbReference type="HOGENOM" id="CLU_027486_1_0_6"/>
<dbReference type="UniPathway" id="UPA00056">
    <property type="reaction ID" value="UER00097"/>
</dbReference>
<dbReference type="UniPathway" id="UPA00059">
    <property type="reaction ID" value="UER00105"/>
</dbReference>
<dbReference type="Proteomes" id="UP000000746">
    <property type="component" value="Chromosome"/>
</dbReference>
<dbReference type="GO" id="GO:0051539">
    <property type="term" value="F:4 iron, 4 sulfur cluster binding"/>
    <property type="evidence" value="ECO:0007669"/>
    <property type="project" value="UniProtKB-UniRule"/>
</dbReference>
<dbReference type="GO" id="GO:0051745">
    <property type="term" value="F:4-hydroxy-3-methylbut-2-enyl diphosphate reductase activity"/>
    <property type="evidence" value="ECO:0007669"/>
    <property type="project" value="UniProtKB-UniRule"/>
</dbReference>
<dbReference type="GO" id="GO:0046872">
    <property type="term" value="F:metal ion binding"/>
    <property type="evidence" value="ECO:0007669"/>
    <property type="project" value="UniProtKB-KW"/>
</dbReference>
<dbReference type="GO" id="GO:0050992">
    <property type="term" value="P:dimethylallyl diphosphate biosynthetic process"/>
    <property type="evidence" value="ECO:0007669"/>
    <property type="project" value="UniProtKB-UniRule"/>
</dbReference>
<dbReference type="GO" id="GO:0019288">
    <property type="term" value="P:isopentenyl diphosphate biosynthetic process, methylerythritol 4-phosphate pathway"/>
    <property type="evidence" value="ECO:0007669"/>
    <property type="project" value="UniProtKB-UniRule"/>
</dbReference>
<dbReference type="GO" id="GO:0016114">
    <property type="term" value="P:terpenoid biosynthetic process"/>
    <property type="evidence" value="ECO:0007669"/>
    <property type="project" value="UniProtKB-UniRule"/>
</dbReference>
<dbReference type="CDD" id="cd13944">
    <property type="entry name" value="lytB_ispH"/>
    <property type="match status" value="1"/>
</dbReference>
<dbReference type="FunFam" id="3.40.1010.20:FF:000001">
    <property type="entry name" value="4-hydroxy-3-methylbut-2-enyl diphosphate reductase"/>
    <property type="match status" value="1"/>
</dbReference>
<dbReference type="FunFam" id="3.40.50.11270:FF:000001">
    <property type="entry name" value="4-hydroxy-3-methylbut-2-enyl diphosphate reductase"/>
    <property type="match status" value="1"/>
</dbReference>
<dbReference type="Gene3D" id="3.40.50.11270">
    <property type="match status" value="1"/>
</dbReference>
<dbReference type="Gene3D" id="3.40.1010.20">
    <property type="entry name" value="4-hydroxy-3-methylbut-2-enyl diphosphate reductase, catalytic domain"/>
    <property type="match status" value="2"/>
</dbReference>
<dbReference type="HAMAP" id="MF_00191">
    <property type="entry name" value="IspH"/>
    <property type="match status" value="1"/>
</dbReference>
<dbReference type="InterPro" id="IPR003451">
    <property type="entry name" value="LytB/IspH"/>
</dbReference>
<dbReference type="NCBIfam" id="TIGR00216">
    <property type="entry name" value="ispH_lytB"/>
    <property type="match status" value="1"/>
</dbReference>
<dbReference type="NCBIfam" id="NF002188">
    <property type="entry name" value="PRK01045.1-2"/>
    <property type="match status" value="1"/>
</dbReference>
<dbReference type="NCBIfam" id="NF002190">
    <property type="entry name" value="PRK01045.1-4"/>
    <property type="match status" value="1"/>
</dbReference>
<dbReference type="PANTHER" id="PTHR30426">
    <property type="entry name" value="4-HYDROXY-3-METHYLBUT-2-ENYL DIPHOSPHATE REDUCTASE"/>
    <property type="match status" value="1"/>
</dbReference>
<dbReference type="PANTHER" id="PTHR30426:SF0">
    <property type="entry name" value="4-HYDROXY-3-METHYLBUT-2-ENYL DIPHOSPHATE REDUCTASE"/>
    <property type="match status" value="1"/>
</dbReference>
<dbReference type="Pfam" id="PF02401">
    <property type="entry name" value="LYTB"/>
    <property type="match status" value="1"/>
</dbReference>
<sequence length="316" mass="34775">MQILLANPRGFCAGVDRAISIVENALAIYGAPIYVRHEVVHNRYVVDSLRERGAIFIEQISEVPDGAILIFSAHGVSQAVRNEAKSRDLTVFDATCPLVTKVHMEVARASRRGEESILIGHAGHPEVEGTMGQYSNPEGGMYLVESPDDVWKLTVKNEEKLSFMTQTTLSVDDTSDVIDALRKRFPKIVGPRKDDICYATTNRQEAVRALAEQAEVVLVVGSKNSSNSNRLAELAQRMGKRAFLIDDAKDIQEEWVKEVKCVGVTAGASAPDILVQNVVARLQQLGGGEAIPLEGREENIVFEVPKELRVDIREVD</sequence>
<accession>B7L4F1</accession>
<feature type="chain" id="PRO_1000124284" description="4-hydroxy-3-methylbut-2-enyl diphosphate reductase">
    <location>
        <begin position="1"/>
        <end position="316"/>
    </location>
</feature>
<feature type="active site" description="Proton donor" evidence="1">
    <location>
        <position position="126"/>
    </location>
</feature>
<feature type="binding site" evidence="1">
    <location>
        <position position="12"/>
    </location>
    <ligand>
        <name>[4Fe-4S] cluster</name>
        <dbReference type="ChEBI" id="CHEBI:49883"/>
    </ligand>
</feature>
<feature type="binding site" evidence="1">
    <location>
        <position position="41"/>
    </location>
    <ligand>
        <name>(2E)-4-hydroxy-3-methylbut-2-enyl diphosphate</name>
        <dbReference type="ChEBI" id="CHEBI:128753"/>
    </ligand>
</feature>
<feature type="binding site" evidence="1">
    <location>
        <position position="41"/>
    </location>
    <ligand>
        <name>dimethylallyl diphosphate</name>
        <dbReference type="ChEBI" id="CHEBI:57623"/>
    </ligand>
</feature>
<feature type="binding site" evidence="1">
    <location>
        <position position="41"/>
    </location>
    <ligand>
        <name>isopentenyl diphosphate</name>
        <dbReference type="ChEBI" id="CHEBI:128769"/>
    </ligand>
</feature>
<feature type="binding site" evidence="1">
    <location>
        <position position="74"/>
    </location>
    <ligand>
        <name>(2E)-4-hydroxy-3-methylbut-2-enyl diphosphate</name>
        <dbReference type="ChEBI" id="CHEBI:128753"/>
    </ligand>
</feature>
<feature type="binding site" evidence="1">
    <location>
        <position position="74"/>
    </location>
    <ligand>
        <name>dimethylallyl diphosphate</name>
        <dbReference type="ChEBI" id="CHEBI:57623"/>
    </ligand>
</feature>
<feature type="binding site" evidence="1">
    <location>
        <position position="74"/>
    </location>
    <ligand>
        <name>isopentenyl diphosphate</name>
        <dbReference type="ChEBI" id="CHEBI:128769"/>
    </ligand>
</feature>
<feature type="binding site" evidence="1">
    <location>
        <position position="96"/>
    </location>
    <ligand>
        <name>[4Fe-4S] cluster</name>
        <dbReference type="ChEBI" id="CHEBI:49883"/>
    </ligand>
</feature>
<feature type="binding site" evidence="1">
    <location>
        <position position="124"/>
    </location>
    <ligand>
        <name>(2E)-4-hydroxy-3-methylbut-2-enyl diphosphate</name>
        <dbReference type="ChEBI" id="CHEBI:128753"/>
    </ligand>
</feature>
<feature type="binding site" evidence="1">
    <location>
        <position position="124"/>
    </location>
    <ligand>
        <name>dimethylallyl diphosphate</name>
        <dbReference type="ChEBI" id="CHEBI:57623"/>
    </ligand>
</feature>
<feature type="binding site" evidence="1">
    <location>
        <position position="124"/>
    </location>
    <ligand>
        <name>isopentenyl diphosphate</name>
        <dbReference type="ChEBI" id="CHEBI:128769"/>
    </ligand>
</feature>
<feature type="binding site" evidence="1">
    <location>
        <position position="167"/>
    </location>
    <ligand>
        <name>(2E)-4-hydroxy-3-methylbut-2-enyl diphosphate</name>
        <dbReference type="ChEBI" id="CHEBI:128753"/>
    </ligand>
</feature>
<feature type="binding site" evidence="1">
    <location>
        <position position="197"/>
    </location>
    <ligand>
        <name>[4Fe-4S] cluster</name>
        <dbReference type="ChEBI" id="CHEBI:49883"/>
    </ligand>
</feature>
<feature type="binding site" evidence="1">
    <location>
        <position position="225"/>
    </location>
    <ligand>
        <name>(2E)-4-hydroxy-3-methylbut-2-enyl diphosphate</name>
        <dbReference type="ChEBI" id="CHEBI:128753"/>
    </ligand>
</feature>
<feature type="binding site" evidence="1">
    <location>
        <position position="225"/>
    </location>
    <ligand>
        <name>dimethylallyl diphosphate</name>
        <dbReference type="ChEBI" id="CHEBI:57623"/>
    </ligand>
</feature>
<feature type="binding site" evidence="1">
    <location>
        <position position="225"/>
    </location>
    <ligand>
        <name>isopentenyl diphosphate</name>
        <dbReference type="ChEBI" id="CHEBI:128769"/>
    </ligand>
</feature>
<feature type="binding site" evidence="1">
    <location>
        <position position="226"/>
    </location>
    <ligand>
        <name>(2E)-4-hydroxy-3-methylbut-2-enyl diphosphate</name>
        <dbReference type="ChEBI" id="CHEBI:128753"/>
    </ligand>
</feature>
<feature type="binding site" evidence="1">
    <location>
        <position position="226"/>
    </location>
    <ligand>
        <name>dimethylallyl diphosphate</name>
        <dbReference type="ChEBI" id="CHEBI:57623"/>
    </ligand>
</feature>
<feature type="binding site" evidence="1">
    <location>
        <position position="226"/>
    </location>
    <ligand>
        <name>isopentenyl diphosphate</name>
        <dbReference type="ChEBI" id="CHEBI:128769"/>
    </ligand>
</feature>
<feature type="binding site" evidence="1">
    <location>
        <position position="227"/>
    </location>
    <ligand>
        <name>(2E)-4-hydroxy-3-methylbut-2-enyl diphosphate</name>
        <dbReference type="ChEBI" id="CHEBI:128753"/>
    </ligand>
</feature>
<feature type="binding site" evidence="1">
    <location>
        <position position="227"/>
    </location>
    <ligand>
        <name>dimethylallyl diphosphate</name>
        <dbReference type="ChEBI" id="CHEBI:57623"/>
    </ligand>
</feature>
<feature type="binding site" evidence="1">
    <location>
        <position position="227"/>
    </location>
    <ligand>
        <name>isopentenyl diphosphate</name>
        <dbReference type="ChEBI" id="CHEBI:128769"/>
    </ligand>
</feature>
<feature type="binding site" evidence="1">
    <location>
        <position position="269"/>
    </location>
    <ligand>
        <name>(2E)-4-hydroxy-3-methylbut-2-enyl diphosphate</name>
        <dbReference type="ChEBI" id="CHEBI:128753"/>
    </ligand>
</feature>
<feature type="binding site" evidence="1">
    <location>
        <position position="269"/>
    </location>
    <ligand>
        <name>dimethylallyl diphosphate</name>
        <dbReference type="ChEBI" id="CHEBI:57623"/>
    </ligand>
</feature>
<feature type="binding site" evidence="1">
    <location>
        <position position="269"/>
    </location>
    <ligand>
        <name>isopentenyl diphosphate</name>
        <dbReference type="ChEBI" id="CHEBI:128769"/>
    </ligand>
</feature>
<protein>
    <recommendedName>
        <fullName evidence="1">4-hydroxy-3-methylbut-2-enyl diphosphate reductase</fullName>
        <shortName evidence="1">HMBPP reductase</shortName>
        <ecNumber evidence="1">1.17.7.4</ecNumber>
    </recommendedName>
</protein>
<gene>
    <name evidence="1" type="primary">ispH</name>
    <name type="ordered locus">EC55989_0028</name>
</gene>
<proteinExistence type="inferred from homology"/>
<comment type="function">
    <text evidence="1">Catalyzes the conversion of 1-hydroxy-2-methyl-2-(E)-butenyl 4-diphosphate (HMBPP) into a mixture of isopentenyl diphosphate (IPP) and dimethylallyl diphosphate (DMAPP). Acts in the terminal step of the DOXP/MEP pathway for isoprenoid precursor biosynthesis.</text>
</comment>
<comment type="catalytic activity">
    <reaction evidence="1">
        <text>isopentenyl diphosphate + 2 oxidized [2Fe-2S]-[ferredoxin] + H2O = (2E)-4-hydroxy-3-methylbut-2-enyl diphosphate + 2 reduced [2Fe-2S]-[ferredoxin] + 2 H(+)</text>
        <dbReference type="Rhea" id="RHEA:24488"/>
        <dbReference type="Rhea" id="RHEA-COMP:10000"/>
        <dbReference type="Rhea" id="RHEA-COMP:10001"/>
        <dbReference type="ChEBI" id="CHEBI:15377"/>
        <dbReference type="ChEBI" id="CHEBI:15378"/>
        <dbReference type="ChEBI" id="CHEBI:33737"/>
        <dbReference type="ChEBI" id="CHEBI:33738"/>
        <dbReference type="ChEBI" id="CHEBI:128753"/>
        <dbReference type="ChEBI" id="CHEBI:128769"/>
        <dbReference type="EC" id="1.17.7.4"/>
    </reaction>
</comment>
<comment type="catalytic activity">
    <reaction evidence="1">
        <text>dimethylallyl diphosphate + 2 oxidized [2Fe-2S]-[ferredoxin] + H2O = (2E)-4-hydroxy-3-methylbut-2-enyl diphosphate + 2 reduced [2Fe-2S]-[ferredoxin] + 2 H(+)</text>
        <dbReference type="Rhea" id="RHEA:24825"/>
        <dbReference type="Rhea" id="RHEA-COMP:10000"/>
        <dbReference type="Rhea" id="RHEA-COMP:10001"/>
        <dbReference type="ChEBI" id="CHEBI:15377"/>
        <dbReference type="ChEBI" id="CHEBI:15378"/>
        <dbReference type="ChEBI" id="CHEBI:33737"/>
        <dbReference type="ChEBI" id="CHEBI:33738"/>
        <dbReference type="ChEBI" id="CHEBI:57623"/>
        <dbReference type="ChEBI" id="CHEBI:128753"/>
        <dbReference type="EC" id="1.17.7.4"/>
    </reaction>
</comment>
<comment type="cofactor">
    <cofactor evidence="1">
        <name>[4Fe-4S] cluster</name>
        <dbReference type="ChEBI" id="CHEBI:49883"/>
    </cofactor>
    <text evidence="1">Binds 1 [4Fe-4S] cluster per subunit.</text>
</comment>
<comment type="pathway">
    <text evidence="1">Isoprenoid biosynthesis; dimethylallyl diphosphate biosynthesis; dimethylallyl diphosphate from (2E)-4-hydroxy-3-methylbutenyl diphosphate: step 1/1.</text>
</comment>
<comment type="pathway">
    <text evidence="1">Isoprenoid biosynthesis; isopentenyl diphosphate biosynthesis via DXP pathway; isopentenyl diphosphate from 1-deoxy-D-xylulose 5-phosphate: step 6/6.</text>
</comment>
<comment type="subunit">
    <text evidence="1">Homodimer.</text>
</comment>
<comment type="similarity">
    <text evidence="1">Belongs to the IspH family.</text>
</comment>
<reference key="1">
    <citation type="journal article" date="2009" name="PLoS Genet.">
        <title>Organised genome dynamics in the Escherichia coli species results in highly diverse adaptive paths.</title>
        <authorList>
            <person name="Touchon M."/>
            <person name="Hoede C."/>
            <person name="Tenaillon O."/>
            <person name="Barbe V."/>
            <person name="Baeriswyl S."/>
            <person name="Bidet P."/>
            <person name="Bingen E."/>
            <person name="Bonacorsi S."/>
            <person name="Bouchier C."/>
            <person name="Bouvet O."/>
            <person name="Calteau A."/>
            <person name="Chiapello H."/>
            <person name="Clermont O."/>
            <person name="Cruveiller S."/>
            <person name="Danchin A."/>
            <person name="Diard M."/>
            <person name="Dossat C."/>
            <person name="Karoui M.E."/>
            <person name="Frapy E."/>
            <person name="Garry L."/>
            <person name="Ghigo J.M."/>
            <person name="Gilles A.M."/>
            <person name="Johnson J."/>
            <person name="Le Bouguenec C."/>
            <person name="Lescat M."/>
            <person name="Mangenot S."/>
            <person name="Martinez-Jehanne V."/>
            <person name="Matic I."/>
            <person name="Nassif X."/>
            <person name="Oztas S."/>
            <person name="Petit M.A."/>
            <person name="Pichon C."/>
            <person name="Rouy Z."/>
            <person name="Ruf C.S."/>
            <person name="Schneider D."/>
            <person name="Tourret J."/>
            <person name="Vacherie B."/>
            <person name="Vallenet D."/>
            <person name="Medigue C."/>
            <person name="Rocha E.P.C."/>
            <person name="Denamur E."/>
        </authorList>
    </citation>
    <scope>NUCLEOTIDE SEQUENCE [LARGE SCALE GENOMIC DNA]</scope>
    <source>
        <strain>55989 / EAEC</strain>
    </source>
</reference>
<organism>
    <name type="scientific">Escherichia coli (strain 55989 / EAEC)</name>
    <dbReference type="NCBI Taxonomy" id="585055"/>
    <lineage>
        <taxon>Bacteria</taxon>
        <taxon>Pseudomonadati</taxon>
        <taxon>Pseudomonadota</taxon>
        <taxon>Gammaproteobacteria</taxon>
        <taxon>Enterobacterales</taxon>
        <taxon>Enterobacteriaceae</taxon>
        <taxon>Escherichia</taxon>
    </lineage>
</organism>
<name>ISPH_ECO55</name>
<evidence type="ECO:0000255" key="1">
    <source>
        <dbReference type="HAMAP-Rule" id="MF_00191"/>
    </source>
</evidence>